<feature type="chain" id="PRO_0000339401" description="Dihydromonapterin reductase">
    <location>
        <begin position="1"/>
        <end position="240"/>
    </location>
</feature>
<feature type="active site" description="Proton acceptor" evidence="2">
    <location>
        <position position="152"/>
    </location>
</feature>
<organism>
    <name type="scientific">Shigella flexneri</name>
    <dbReference type="NCBI Taxonomy" id="623"/>
    <lineage>
        <taxon>Bacteria</taxon>
        <taxon>Pseudomonadati</taxon>
        <taxon>Pseudomonadota</taxon>
        <taxon>Gammaproteobacteria</taxon>
        <taxon>Enterobacterales</taxon>
        <taxon>Enterobacteriaceae</taxon>
        <taxon>Shigella</taxon>
    </lineage>
</organism>
<reference key="1">
    <citation type="journal article" date="2002" name="Nucleic Acids Res.">
        <title>Genome sequence of Shigella flexneri 2a: insights into pathogenicity through comparison with genomes of Escherichia coli K12 and O157.</title>
        <authorList>
            <person name="Jin Q."/>
            <person name="Yuan Z."/>
            <person name="Xu J."/>
            <person name="Wang Y."/>
            <person name="Shen Y."/>
            <person name="Lu W."/>
            <person name="Wang J."/>
            <person name="Liu H."/>
            <person name="Yang J."/>
            <person name="Yang F."/>
            <person name="Zhang X."/>
            <person name="Zhang J."/>
            <person name="Yang G."/>
            <person name="Wu H."/>
            <person name="Qu D."/>
            <person name="Dong J."/>
            <person name="Sun L."/>
            <person name="Xue Y."/>
            <person name="Zhao A."/>
            <person name="Gao Y."/>
            <person name="Zhu J."/>
            <person name="Kan B."/>
            <person name="Ding K."/>
            <person name="Chen S."/>
            <person name="Cheng H."/>
            <person name="Yao Z."/>
            <person name="He B."/>
            <person name="Chen R."/>
            <person name="Ma D."/>
            <person name="Qiang B."/>
            <person name="Wen Y."/>
            <person name="Hou Y."/>
            <person name="Yu J."/>
        </authorList>
    </citation>
    <scope>NUCLEOTIDE SEQUENCE [LARGE SCALE GENOMIC DNA]</scope>
    <source>
        <strain>301 / Serotype 2a</strain>
    </source>
</reference>
<reference key="2">
    <citation type="journal article" date="2003" name="Infect. Immun.">
        <title>Complete genome sequence and comparative genomics of Shigella flexneri serotype 2a strain 2457T.</title>
        <authorList>
            <person name="Wei J."/>
            <person name="Goldberg M.B."/>
            <person name="Burland V."/>
            <person name="Venkatesan M.M."/>
            <person name="Deng W."/>
            <person name="Fournier G."/>
            <person name="Mayhew G.F."/>
            <person name="Plunkett G. III"/>
            <person name="Rose D.J."/>
            <person name="Darling A."/>
            <person name="Mau B."/>
            <person name="Perna N.T."/>
            <person name="Payne S.M."/>
            <person name="Runyen-Janecky L.J."/>
            <person name="Zhou S."/>
            <person name="Schwartz D.C."/>
            <person name="Blattner F.R."/>
        </authorList>
    </citation>
    <scope>NUCLEOTIDE SEQUENCE [LARGE SCALE GENOMIC DNA]</scope>
    <source>
        <strain>ATCC 700930 / 2457T / Serotype 2a</strain>
    </source>
</reference>
<sequence>MGKTQPLPILITGGGRRIGLALAWHFINQKQPVIVSYRTHYPAIDGLINAGAQCIQADFSTNDGVMAFADEVLKTTHGLRAILHNASAWIAEKPGAPLADVLACMMQIHVNTPYLLNHALERLLRGHGHAASDIIHFTDYVVERGSDKHVAYAASKAALDNMTRSFARKLAPEVKVNSIAPSLILFNEHDDAEYRQQALNKSLMKTAPGEKEVIDLVDYLLTSCFVTGRSFPLDGGRHLR</sequence>
<comment type="function">
    <text evidence="1">Catalyzes the reduction of dihydromonapterin to tetrahydromonapterin. Also has lower activity with dihydrofolate.</text>
</comment>
<comment type="catalytic activity">
    <reaction evidence="1">
        <text>(6S)-5,6,7,8-tetrahydrofolate + NADP(+) = 7,8-dihydrofolate + NADPH + H(+)</text>
        <dbReference type="Rhea" id="RHEA:15009"/>
        <dbReference type="ChEBI" id="CHEBI:15378"/>
        <dbReference type="ChEBI" id="CHEBI:57451"/>
        <dbReference type="ChEBI" id="CHEBI:57453"/>
        <dbReference type="ChEBI" id="CHEBI:57783"/>
        <dbReference type="ChEBI" id="CHEBI:58349"/>
        <dbReference type="EC" id="1.5.1.3"/>
    </reaction>
</comment>
<comment type="catalytic activity">
    <reaction evidence="1">
        <text>7,8-dihydromonapterin + NADPH + H(+) = 5,6,7,8-tetrahydromonapterin + NADP(+)</text>
        <dbReference type="Rhea" id="RHEA:34847"/>
        <dbReference type="ChEBI" id="CHEBI:15378"/>
        <dbReference type="ChEBI" id="CHEBI:57783"/>
        <dbReference type="ChEBI" id="CHEBI:58349"/>
        <dbReference type="ChEBI" id="CHEBI:71175"/>
        <dbReference type="ChEBI" id="CHEBI:71177"/>
        <dbReference type="EC" id="1.5.1.50"/>
    </reaction>
</comment>
<comment type="similarity">
    <text evidence="3">Belongs to the short-chain dehydrogenases/reductases (SDR) family. FolM subfamily.</text>
</comment>
<dbReference type="EC" id="1.5.1.50" evidence="1"/>
<dbReference type="EC" id="1.5.1.3" evidence="1"/>
<dbReference type="EMBL" id="AE005674">
    <property type="protein sequence ID" value="AAN43210.1"/>
    <property type="molecule type" value="Genomic_DNA"/>
</dbReference>
<dbReference type="EMBL" id="AE014073">
    <property type="protein sequence ID" value="AAP17098.1"/>
    <property type="molecule type" value="Genomic_DNA"/>
</dbReference>
<dbReference type="RefSeq" id="WP_000520806.1">
    <property type="nucleotide sequence ID" value="NZ_WPGW01000024.1"/>
</dbReference>
<dbReference type="SMR" id="Q83RC9"/>
<dbReference type="STRING" id="198214.SF1627"/>
<dbReference type="PaxDb" id="198214-SF1627"/>
<dbReference type="KEGG" id="sfl:SF1627"/>
<dbReference type="KEGG" id="sfx:S1759"/>
<dbReference type="PATRIC" id="fig|198214.7.peg.1921"/>
<dbReference type="HOGENOM" id="CLU_010194_1_3_6"/>
<dbReference type="Proteomes" id="UP000001006">
    <property type="component" value="Chromosome"/>
</dbReference>
<dbReference type="Proteomes" id="UP000002673">
    <property type="component" value="Chromosome"/>
</dbReference>
<dbReference type="GO" id="GO:0004146">
    <property type="term" value="F:dihydrofolate reductase activity"/>
    <property type="evidence" value="ECO:0007669"/>
    <property type="project" value="UniProtKB-EC"/>
</dbReference>
<dbReference type="GO" id="GO:0006730">
    <property type="term" value="P:one-carbon metabolic process"/>
    <property type="evidence" value="ECO:0007669"/>
    <property type="project" value="UniProtKB-KW"/>
</dbReference>
<dbReference type="CDD" id="cd05357">
    <property type="entry name" value="PR_SDR_c"/>
    <property type="match status" value="1"/>
</dbReference>
<dbReference type="FunFam" id="3.40.50.720:FF:000225">
    <property type="entry name" value="Dihydrofolate reductase FolM"/>
    <property type="match status" value="1"/>
</dbReference>
<dbReference type="Gene3D" id="3.40.50.720">
    <property type="entry name" value="NAD(P)-binding Rossmann-like Domain"/>
    <property type="match status" value="1"/>
</dbReference>
<dbReference type="InterPro" id="IPR036291">
    <property type="entry name" value="NAD(P)-bd_dom_sf"/>
</dbReference>
<dbReference type="InterPro" id="IPR020904">
    <property type="entry name" value="Sc_DH/Rdtase_CS"/>
</dbReference>
<dbReference type="InterPro" id="IPR002347">
    <property type="entry name" value="SDR_fam"/>
</dbReference>
<dbReference type="NCBIfam" id="NF005066">
    <property type="entry name" value="PRK06483.1"/>
    <property type="match status" value="1"/>
</dbReference>
<dbReference type="PANTHER" id="PTHR43639:SF6">
    <property type="entry name" value="DIHYDROMONAPTERIN REDUCTASE"/>
    <property type="match status" value="1"/>
</dbReference>
<dbReference type="PANTHER" id="PTHR43639">
    <property type="entry name" value="OXIDOREDUCTASE, SHORT-CHAIN DEHYDROGENASE/REDUCTASE FAMILY (AFU_ORTHOLOGUE AFUA_5G02870)"/>
    <property type="match status" value="1"/>
</dbReference>
<dbReference type="Pfam" id="PF13561">
    <property type="entry name" value="adh_short_C2"/>
    <property type="match status" value="1"/>
</dbReference>
<dbReference type="PRINTS" id="PR00081">
    <property type="entry name" value="GDHRDH"/>
</dbReference>
<dbReference type="SUPFAM" id="SSF51735">
    <property type="entry name" value="NAD(P)-binding Rossmann-fold domains"/>
    <property type="match status" value="1"/>
</dbReference>
<dbReference type="PROSITE" id="PS00061">
    <property type="entry name" value="ADH_SHORT"/>
    <property type="match status" value="1"/>
</dbReference>
<gene>
    <name type="primary">folM</name>
    <name type="ordered locus">SF1627</name>
    <name type="ordered locus">S1759</name>
</gene>
<evidence type="ECO:0000250" key="1">
    <source>
        <dbReference type="UniProtKB" id="P0AFS3"/>
    </source>
</evidence>
<evidence type="ECO:0000255" key="2">
    <source>
        <dbReference type="PROSITE-ProRule" id="PRU10001"/>
    </source>
</evidence>
<evidence type="ECO:0000305" key="3"/>
<protein>
    <recommendedName>
        <fullName>Dihydromonapterin reductase</fullName>
        <shortName>H(2)-MPt reductase</shortName>
        <ecNumber evidence="1">1.5.1.50</ecNumber>
    </recommendedName>
    <alternativeName>
        <fullName>Dihydrofolate reductase</fullName>
        <shortName>DHFR</shortName>
        <ecNumber evidence="1">1.5.1.3</ecNumber>
    </alternativeName>
</protein>
<proteinExistence type="inferred from homology"/>
<name>FOLM_SHIFL</name>
<keyword id="KW-0521">NADP</keyword>
<keyword id="KW-0554">One-carbon metabolism</keyword>
<keyword id="KW-0560">Oxidoreductase</keyword>
<keyword id="KW-1185">Reference proteome</keyword>
<accession>Q83RC9</accession>
<accession>Q7C1H7</accession>